<dbReference type="EC" id="2.1.1.33" evidence="2"/>
<dbReference type="EMBL" id="CP000435">
    <property type="protein sequence ID" value="ABI47587.1"/>
    <property type="molecule type" value="Genomic_DNA"/>
</dbReference>
<dbReference type="RefSeq" id="WP_011618304.1">
    <property type="nucleotide sequence ID" value="NC_008319.1"/>
</dbReference>
<dbReference type="SMR" id="Q0IDB0"/>
<dbReference type="STRING" id="64471.sync_0328"/>
<dbReference type="KEGG" id="syg:sync_0328"/>
<dbReference type="eggNOG" id="COG0220">
    <property type="taxonomic scope" value="Bacteria"/>
</dbReference>
<dbReference type="HOGENOM" id="CLU_050910_1_3_3"/>
<dbReference type="OrthoDB" id="9802090at2"/>
<dbReference type="UniPathway" id="UPA00989"/>
<dbReference type="Proteomes" id="UP000001961">
    <property type="component" value="Chromosome"/>
</dbReference>
<dbReference type="GO" id="GO:0043527">
    <property type="term" value="C:tRNA methyltransferase complex"/>
    <property type="evidence" value="ECO:0007669"/>
    <property type="project" value="TreeGrafter"/>
</dbReference>
<dbReference type="GO" id="GO:0008176">
    <property type="term" value="F:tRNA (guanine(46)-N7)-methyltransferase activity"/>
    <property type="evidence" value="ECO:0007669"/>
    <property type="project" value="UniProtKB-UniRule"/>
</dbReference>
<dbReference type="CDD" id="cd02440">
    <property type="entry name" value="AdoMet_MTases"/>
    <property type="match status" value="1"/>
</dbReference>
<dbReference type="Gene3D" id="3.40.50.150">
    <property type="entry name" value="Vaccinia Virus protein VP39"/>
    <property type="match status" value="1"/>
</dbReference>
<dbReference type="HAMAP" id="MF_01057">
    <property type="entry name" value="tRNA_methyltr_TrmB"/>
    <property type="match status" value="1"/>
</dbReference>
<dbReference type="InterPro" id="IPR029063">
    <property type="entry name" value="SAM-dependent_MTases_sf"/>
</dbReference>
<dbReference type="InterPro" id="IPR003358">
    <property type="entry name" value="tRNA_(Gua-N-7)_MeTrfase_Trmb"/>
</dbReference>
<dbReference type="InterPro" id="IPR055361">
    <property type="entry name" value="tRNA_methyltr_TrmB_bact"/>
</dbReference>
<dbReference type="NCBIfam" id="TIGR00091">
    <property type="entry name" value="tRNA (guanosine(46)-N7)-methyltransferase TrmB"/>
    <property type="match status" value="1"/>
</dbReference>
<dbReference type="PANTHER" id="PTHR23417">
    <property type="entry name" value="3-DEOXY-D-MANNO-OCTULOSONIC-ACID TRANSFERASE/TRNA GUANINE-N 7 - -METHYLTRANSFERASE"/>
    <property type="match status" value="1"/>
</dbReference>
<dbReference type="PANTHER" id="PTHR23417:SF21">
    <property type="entry name" value="TRNA (GUANINE-N(7)-)-METHYLTRANSFERASE"/>
    <property type="match status" value="1"/>
</dbReference>
<dbReference type="Pfam" id="PF02390">
    <property type="entry name" value="Methyltransf_4"/>
    <property type="match status" value="1"/>
</dbReference>
<dbReference type="SUPFAM" id="SSF53335">
    <property type="entry name" value="S-adenosyl-L-methionine-dependent methyltransferases"/>
    <property type="match status" value="1"/>
</dbReference>
<dbReference type="PROSITE" id="PS51625">
    <property type="entry name" value="SAM_MT_TRMB"/>
    <property type="match status" value="1"/>
</dbReference>
<gene>
    <name evidence="2" type="primary">trmB</name>
    <name type="ordered locus">sync_0328</name>
</gene>
<feature type="chain" id="PRO_0000288242" description="tRNA (guanine-N(7)-)-methyltransferase">
    <location>
        <begin position="1"/>
        <end position="237"/>
    </location>
</feature>
<feature type="active site" evidence="1">
    <location>
        <position position="113"/>
    </location>
</feature>
<feature type="binding site" evidence="2">
    <location>
        <position position="35"/>
    </location>
    <ligand>
        <name>S-adenosyl-L-methionine</name>
        <dbReference type="ChEBI" id="CHEBI:59789"/>
    </ligand>
</feature>
<feature type="binding site" evidence="2">
    <location>
        <position position="60"/>
    </location>
    <ligand>
        <name>S-adenosyl-L-methionine</name>
        <dbReference type="ChEBI" id="CHEBI:59789"/>
    </ligand>
</feature>
<feature type="binding site" evidence="2">
    <location>
        <position position="87"/>
    </location>
    <ligand>
        <name>S-adenosyl-L-methionine</name>
        <dbReference type="ChEBI" id="CHEBI:59789"/>
    </ligand>
</feature>
<feature type="binding site" evidence="2">
    <location>
        <position position="113"/>
    </location>
    <ligand>
        <name>S-adenosyl-L-methionine</name>
        <dbReference type="ChEBI" id="CHEBI:59789"/>
    </ligand>
</feature>
<feature type="binding site" evidence="2">
    <location>
        <position position="117"/>
    </location>
    <ligand>
        <name>substrate</name>
    </ligand>
</feature>
<feature type="binding site" evidence="2">
    <location>
        <position position="149"/>
    </location>
    <ligand>
        <name>substrate</name>
    </ligand>
</feature>
<name>TRMB_SYNS3</name>
<accession>Q0IDB0</accession>
<comment type="function">
    <text evidence="2">Catalyzes the formation of N(7)-methylguanine at position 46 (m7G46) in tRNA.</text>
</comment>
<comment type="catalytic activity">
    <reaction evidence="2">
        <text>guanosine(46) in tRNA + S-adenosyl-L-methionine = N(7)-methylguanosine(46) in tRNA + S-adenosyl-L-homocysteine</text>
        <dbReference type="Rhea" id="RHEA:42708"/>
        <dbReference type="Rhea" id="RHEA-COMP:10188"/>
        <dbReference type="Rhea" id="RHEA-COMP:10189"/>
        <dbReference type="ChEBI" id="CHEBI:57856"/>
        <dbReference type="ChEBI" id="CHEBI:59789"/>
        <dbReference type="ChEBI" id="CHEBI:74269"/>
        <dbReference type="ChEBI" id="CHEBI:74480"/>
        <dbReference type="EC" id="2.1.1.33"/>
    </reaction>
</comment>
<comment type="pathway">
    <text evidence="2">tRNA modification; N(7)-methylguanine-tRNA biosynthesis.</text>
</comment>
<comment type="similarity">
    <text evidence="2">Belongs to the class I-like SAM-binding methyltransferase superfamily. TrmB family.</text>
</comment>
<keyword id="KW-0489">Methyltransferase</keyword>
<keyword id="KW-1185">Reference proteome</keyword>
<keyword id="KW-0949">S-adenosyl-L-methionine</keyword>
<keyword id="KW-0808">Transferase</keyword>
<keyword id="KW-0819">tRNA processing</keyword>
<evidence type="ECO:0000250" key="1"/>
<evidence type="ECO:0000255" key="2">
    <source>
        <dbReference type="HAMAP-Rule" id="MF_01057"/>
    </source>
</evidence>
<proteinExistence type="inferred from homology"/>
<protein>
    <recommendedName>
        <fullName evidence="2">tRNA (guanine-N(7)-)-methyltransferase</fullName>
        <ecNumber evidence="2">2.1.1.33</ecNumber>
    </recommendedName>
    <alternativeName>
        <fullName evidence="2">tRNA (guanine(46)-N(7))-methyltransferase</fullName>
    </alternativeName>
    <alternativeName>
        <fullName evidence="2">tRNA(m7G46)-methyltransferase</fullName>
    </alternativeName>
</protein>
<organism>
    <name type="scientific">Synechococcus sp. (strain CC9311)</name>
    <dbReference type="NCBI Taxonomy" id="64471"/>
    <lineage>
        <taxon>Bacteria</taxon>
        <taxon>Bacillati</taxon>
        <taxon>Cyanobacteriota</taxon>
        <taxon>Cyanophyceae</taxon>
        <taxon>Synechococcales</taxon>
        <taxon>Synechococcaceae</taxon>
        <taxon>Synechococcus</taxon>
    </lineage>
</organism>
<reference key="1">
    <citation type="journal article" date="2006" name="Proc. Natl. Acad. Sci. U.S.A.">
        <title>Genome sequence of Synechococcus CC9311: insights into adaptation to a coastal environment.</title>
        <authorList>
            <person name="Palenik B."/>
            <person name="Ren Q."/>
            <person name="Dupont C.L."/>
            <person name="Myers G.S."/>
            <person name="Heidelberg J.F."/>
            <person name="Badger J.H."/>
            <person name="Madupu R."/>
            <person name="Nelson W.C."/>
            <person name="Brinkac L.M."/>
            <person name="Dodson R.J."/>
            <person name="Durkin A.S."/>
            <person name="Daugherty S.C."/>
            <person name="Sullivan S.A."/>
            <person name="Khouri H."/>
            <person name="Mohamoud Y."/>
            <person name="Halpin R."/>
            <person name="Paulsen I.T."/>
        </authorList>
    </citation>
    <scope>NUCLEOTIDE SEQUENCE [LARGE SCALE GENOMIC DNA]</scope>
    <source>
        <strain>CC9311</strain>
    </source>
</reference>
<sequence length="237" mass="27319">MRQHVNPLSRFFQLPLELPAPHELFEHPNLPIHLDIGCARGFFLLELAAMQPERNHLGVEIRRPLVQAAQHDRDRQEQHNLHFLFCNANISLEAWMAALPPDQLQLVSIQFPDPWFKQRHRKRRVLQPALLLAIAAALHPGRHLFLQSDVLAVIEPMVALVELSNCFARPKDDPQPWRSSNPLPVATERERYVQEQGQPTYRVLFERTQAELPALRDLEMAWQQVDNSKDAAPTPHG</sequence>